<evidence type="ECO:0000255" key="1">
    <source>
        <dbReference type="HAMAP-Rule" id="MF_01569"/>
    </source>
</evidence>
<dbReference type="EC" id="6.1.1.15" evidence="1"/>
<dbReference type="EMBL" id="CP000946">
    <property type="protein sequence ID" value="ACA79079.1"/>
    <property type="molecule type" value="Genomic_DNA"/>
</dbReference>
<dbReference type="RefSeq" id="WP_001260712.1">
    <property type="nucleotide sequence ID" value="NZ_MTFT01000035.1"/>
</dbReference>
<dbReference type="SMR" id="B1IQE6"/>
<dbReference type="GeneID" id="93777229"/>
<dbReference type="KEGG" id="ecl:EcolC_3465"/>
<dbReference type="HOGENOM" id="CLU_016739_0_0_6"/>
<dbReference type="GO" id="GO:0005829">
    <property type="term" value="C:cytosol"/>
    <property type="evidence" value="ECO:0007669"/>
    <property type="project" value="TreeGrafter"/>
</dbReference>
<dbReference type="GO" id="GO:0002161">
    <property type="term" value="F:aminoacyl-tRNA deacylase activity"/>
    <property type="evidence" value="ECO:0007669"/>
    <property type="project" value="InterPro"/>
</dbReference>
<dbReference type="GO" id="GO:0005524">
    <property type="term" value="F:ATP binding"/>
    <property type="evidence" value="ECO:0007669"/>
    <property type="project" value="UniProtKB-UniRule"/>
</dbReference>
<dbReference type="GO" id="GO:0004827">
    <property type="term" value="F:proline-tRNA ligase activity"/>
    <property type="evidence" value="ECO:0007669"/>
    <property type="project" value="UniProtKB-UniRule"/>
</dbReference>
<dbReference type="GO" id="GO:0006433">
    <property type="term" value="P:prolyl-tRNA aminoacylation"/>
    <property type="evidence" value="ECO:0007669"/>
    <property type="project" value="UniProtKB-UniRule"/>
</dbReference>
<dbReference type="CDD" id="cd04334">
    <property type="entry name" value="ProRS-INS"/>
    <property type="match status" value="1"/>
</dbReference>
<dbReference type="CDD" id="cd00861">
    <property type="entry name" value="ProRS_anticodon_short"/>
    <property type="match status" value="1"/>
</dbReference>
<dbReference type="CDD" id="cd00779">
    <property type="entry name" value="ProRS_core_prok"/>
    <property type="match status" value="1"/>
</dbReference>
<dbReference type="FunFam" id="3.30.930.10:FF:000012">
    <property type="entry name" value="Proline--tRNA ligase"/>
    <property type="match status" value="1"/>
</dbReference>
<dbReference type="FunFam" id="3.30.930.10:FF:000097">
    <property type="entry name" value="Proline--tRNA ligase"/>
    <property type="match status" value="1"/>
</dbReference>
<dbReference type="FunFam" id="3.40.50.800:FF:000006">
    <property type="entry name" value="Proline--tRNA ligase"/>
    <property type="match status" value="1"/>
</dbReference>
<dbReference type="FunFam" id="3.90.960.10:FF:000001">
    <property type="entry name" value="Proline--tRNA ligase"/>
    <property type="match status" value="1"/>
</dbReference>
<dbReference type="Gene3D" id="3.40.50.800">
    <property type="entry name" value="Anticodon-binding domain"/>
    <property type="match status" value="1"/>
</dbReference>
<dbReference type="Gene3D" id="3.30.930.10">
    <property type="entry name" value="Bira Bifunctional Protein, Domain 2"/>
    <property type="match status" value="2"/>
</dbReference>
<dbReference type="Gene3D" id="3.90.960.10">
    <property type="entry name" value="YbaK/aminoacyl-tRNA synthetase-associated domain"/>
    <property type="match status" value="1"/>
</dbReference>
<dbReference type="HAMAP" id="MF_01569">
    <property type="entry name" value="Pro_tRNA_synth_type1"/>
    <property type="match status" value="1"/>
</dbReference>
<dbReference type="InterPro" id="IPR002314">
    <property type="entry name" value="aa-tRNA-synt_IIb"/>
</dbReference>
<dbReference type="InterPro" id="IPR006195">
    <property type="entry name" value="aa-tRNA-synth_II"/>
</dbReference>
<dbReference type="InterPro" id="IPR045864">
    <property type="entry name" value="aa-tRNA-synth_II/BPL/LPL"/>
</dbReference>
<dbReference type="InterPro" id="IPR004154">
    <property type="entry name" value="Anticodon-bd"/>
</dbReference>
<dbReference type="InterPro" id="IPR036621">
    <property type="entry name" value="Anticodon-bd_dom_sf"/>
</dbReference>
<dbReference type="InterPro" id="IPR002316">
    <property type="entry name" value="Pro-tRNA-ligase_IIa"/>
</dbReference>
<dbReference type="InterPro" id="IPR004500">
    <property type="entry name" value="Pro-tRNA-synth_IIa_bac-type"/>
</dbReference>
<dbReference type="InterPro" id="IPR023717">
    <property type="entry name" value="Pro-tRNA-Synthase_IIa_type1"/>
</dbReference>
<dbReference type="InterPro" id="IPR050062">
    <property type="entry name" value="Pro-tRNA_synthetase"/>
</dbReference>
<dbReference type="InterPro" id="IPR044140">
    <property type="entry name" value="ProRS_anticodon_short"/>
</dbReference>
<dbReference type="InterPro" id="IPR033730">
    <property type="entry name" value="ProRS_core_prok"/>
</dbReference>
<dbReference type="InterPro" id="IPR036754">
    <property type="entry name" value="YbaK/aa-tRNA-synt-asso_dom_sf"/>
</dbReference>
<dbReference type="InterPro" id="IPR007214">
    <property type="entry name" value="YbaK/aa-tRNA-synth-assoc-dom"/>
</dbReference>
<dbReference type="NCBIfam" id="NF006625">
    <property type="entry name" value="PRK09194.1"/>
    <property type="match status" value="1"/>
</dbReference>
<dbReference type="NCBIfam" id="TIGR00409">
    <property type="entry name" value="proS_fam_II"/>
    <property type="match status" value="1"/>
</dbReference>
<dbReference type="PANTHER" id="PTHR42753">
    <property type="entry name" value="MITOCHONDRIAL RIBOSOME PROTEIN L39/PROLYL-TRNA LIGASE FAMILY MEMBER"/>
    <property type="match status" value="1"/>
</dbReference>
<dbReference type="PANTHER" id="PTHR42753:SF2">
    <property type="entry name" value="PROLINE--TRNA LIGASE"/>
    <property type="match status" value="1"/>
</dbReference>
<dbReference type="Pfam" id="PF03129">
    <property type="entry name" value="HGTP_anticodon"/>
    <property type="match status" value="1"/>
</dbReference>
<dbReference type="Pfam" id="PF00587">
    <property type="entry name" value="tRNA-synt_2b"/>
    <property type="match status" value="1"/>
</dbReference>
<dbReference type="Pfam" id="PF04073">
    <property type="entry name" value="tRNA_edit"/>
    <property type="match status" value="1"/>
</dbReference>
<dbReference type="PIRSF" id="PIRSF001535">
    <property type="entry name" value="ProRS_1"/>
    <property type="match status" value="1"/>
</dbReference>
<dbReference type="PRINTS" id="PR01046">
    <property type="entry name" value="TRNASYNTHPRO"/>
</dbReference>
<dbReference type="SUPFAM" id="SSF52954">
    <property type="entry name" value="Class II aaRS ABD-related"/>
    <property type="match status" value="1"/>
</dbReference>
<dbReference type="SUPFAM" id="SSF55681">
    <property type="entry name" value="Class II aaRS and biotin synthetases"/>
    <property type="match status" value="1"/>
</dbReference>
<dbReference type="SUPFAM" id="SSF55826">
    <property type="entry name" value="YbaK/ProRS associated domain"/>
    <property type="match status" value="1"/>
</dbReference>
<dbReference type="PROSITE" id="PS50862">
    <property type="entry name" value="AA_TRNA_LIGASE_II"/>
    <property type="match status" value="1"/>
</dbReference>
<feature type="chain" id="PRO_1000087839" description="Proline--tRNA ligase">
    <location>
        <begin position="1"/>
        <end position="572"/>
    </location>
</feature>
<accession>B1IQE6</accession>
<organism>
    <name type="scientific">Escherichia coli (strain ATCC 8739 / DSM 1576 / NBRC 3972 / NCIMB 8545 / WDCM 00012 / Crooks)</name>
    <dbReference type="NCBI Taxonomy" id="481805"/>
    <lineage>
        <taxon>Bacteria</taxon>
        <taxon>Pseudomonadati</taxon>
        <taxon>Pseudomonadota</taxon>
        <taxon>Gammaproteobacteria</taxon>
        <taxon>Enterobacterales</taxon>
        <taxon>Enterobacteriaceae</taxon>
        <taxon>Escherichia</taxon>
    </lineage>
</organism>
<reference key="1">
    <citation type="submission" date="2008-02" db="EMBL/GenBank/DDBJ databases">
        <title>Complete sequence of Escherichia coli C str. ATCC 8739.</title>
        <authorList>
            <person name="Copeland A."/>
            <person name="Lucas S."/>
            <person name="Lapidus A."/>
            <person name="Glavina del Rio T."/>
            <person name="Dalin E."/>
            <person name="Tice H."/>
            <person name="Bruce D."/>
            <person name="Goodwin L."/>
            <person name="Pitluck S."/>
            <person name="Kiss H."/>
            <person name="Brettin T."/>
            <person name="Detter J.C."/>
            <person name="Han C."/>
            <person name="Kuske C.R."/>
            <person name="Schmutz J."/>
            <person name="Larimer F."/>
            <person name="Land M."/>
            <person name="Hauser L."/>
            <person name="Kyrpides N."/>
            <person name="Mikhailova N."/>
            <person name="Ingram L."/>
            <person name="Richardson P."/>
        </authorList>
    </citation>
    <scope>NUCLEOTIDE SEQUENCE [LARGE SCALE GENOMIC DNA]</scope>
    <source>
        <strain>ATCC 8739 / DSM 1576 / NBRC 3972 / NCIMB 8545 / WDCM 00012 / Crooks</strain>
    </source>
</reference>
<gene>
    <name evidence="1" type="primary">proS</name>
    <name type="ordered locus">EcolC_3465</name>
</gene>
<keyword id="KW-0030">Aminoacyl-tRNA synthetase</keyword>
<keyword id="KW-0067">ATP-binding</keyword>
<keyword id="KW-0963">Cytoplasm</keyword>
<keyword id="KW-0436">Ligase</keyword>
<keyword id="KW-0547">Nucleotide-binding</keyword>
<keyword id="KW-0648">Protein biosynthesis</keyword>
<protein>
    <recommendedName>
        <fullName evidence="1">Proline--tRNA ligase</fullName>
        <ecNumber evidence="1">6.1.1.15</ecNumber>
    </recommendedName>
    <alternativeName>
        <fullName evidence="1">Prolyl-tRNA synthetase</fullName>
        <shortName evidence="1">ProRS</shortName>
    </alternativeName>
</protein>
<name>SYP_ECOLC</name>
<comment type="function">
    <text evidence="1">Catalyzes the attachment of proline to tRNA(Pro) in a two-step reaction: proline is first activated by ATP to form Pro-AMP and then transferred to the acceptor end of tRNA(Pro). As ProRS can inadvertently accommodate and process non-cognate amino acids such as alanine and cysteine, to avoid such errors it has two additional distinct editing activities against alanine. One activity is designated as 'pretransfer' editing and involves the tRNA(Pro)-independent hydrolysis of activated Ala-AMP. The other activity is designated 'posttransfer' editing and involves deacylation of mischarged Ala-tRNA(Pro). The misacylated Cys-tRNA(Pro) is not edited by ProRS.</text>
</comment>
<comment type="catalytic activity">
    <reaction evidence="1">
        <text>tRNA(Pro) + L-proline + ATP = L-prolyl-tRNA(Pro) + AMP + diphosphate</text>
        <dbReference type="Rhea" id="RHEA:14305"/>
        <dbReference type="Rhea" id="RHEA-COMP:9700"/>
        <dbReference type="Rhea" id="RHEA-COMP:9702"/>
        <dbReference type="ChEBI" id="CHEBI:30616"/>
        <dbReference type="ChEBI" id="CHEBI:33019"/>
        <dbReference type="ChEBI" id="CHEBI:60039"/>
        <dbReference type="ChEBI" id="CHEBI:78442"/>
        <dbReference type="ChEBI" id="CHEBI:78532"/>
        <dbReference type="ChEBI" id="CHEBI:456215"/>
        <dbReference type="EC" id="6.1.1.15"/>
    </reaction>
</comment>
<comment type="subunit">
    <text evidence="1">Homodimer.</text>
</comment>
<comment type="subcellular location">
    <subcellularLocation>
        <location evidence="1">Cytoplasm</location>
    </subcellularLocation>
</comment>
<comment type="domain">
    <text evidence="1">Consists of three domains: the N-terminal catalytic domain, the editing domain and the C-terminal anticodon-binding domain.</text>
</comment>
<comment type="similarity">
    <text evidence="1">Belongs to the class-II aminoacyl-tRNA synthetase family. ProS type 1 subfamily.</text>
</comment>
<proteinExistence type="inferred from homology"/>
<sequence>MRTSQYLLSTLKETPADAEVISHQLMLRAGMIRKLASGLYTWLPTGVRVLKKVENIVREEMNNAGAIEVSMPVVQPADLWQESGRWEQYGPELLRFVDRGERPFVLGPTHEEVITDLIRNELSSYKQLPLNFYQIQTKFRDEVRPRFGVMRSREFLMKDAYSFHTSQESLQETYDAMYAAYSKIFSRMGLDFRAVQADTGSIGGSASHEFQVLAQSGEDDVVFSDTSDYAANIELAEAIAPKEPRAAATQEMTLVDTPNAKTIAELVEQFNLPIEKTVKTLLVKAVEGSSFPLVALLVRGDHELNEVKAEKLPQVASPLTFATEEEIRAVVKAGPGSLGPVNMPIPVVIDRTVAAMSDFAAGANIDGKHYFGINWDRDVATPEVADIRNVVAGDPSPDGQGTLLIKRGIEVGHIFQLGTKYSEALKASVQGEDGRNQILTMGCYGIGVTRVVAAAIEQNYDERGIVWPDAIAPFQVAILPMNMHKSFRVQELAEKLYSELRAQGIEVLLDDRKERPGVMFADMELIGIPHTIVLGDRNLDNDDIEYKYRRNGEKQLIKTGDIVEYLVKQIKG</sequence>